<evidence type="ECO:0000255" key="1">
    <source>
        <dbReference type="HAMAP-Rule" id="MF_00090"/>
    </source>
</evidence>
<accession>Q3JAW6</accession>
<keyword id="KW-0963">Cytoplasm</keyword>
<keyword id="KW-0489">Methyltransferase</keyword>
<keyword id="KW-1185">Reference proteome</keyword>
<keyword id="KW-0949">S-adenosyl-L-methionine</keyword>
<keyword id="KW-0808">Transferase</keyword>
<reference key="1">
    <citation type="journal article" date="2006" name="Appl. Environ. Microbiol.">
        <title>Complete genome sequence of the marine, chemolithoautotrophic, ammonia-oxidizing bacterium Nitrosococcus oceani ATCC 19707.</title>
        <authorList>
            <person name="Klotz M.G."/>
            <person name="Arp D.J."/>
            <person name="Chain P.S.G."/>
            <person name="El-Sheikh A.F."/>
            <person name="Hauser L.J."/>
            <person name="Hommes N.G."/>
            <person name="Larimer F.W."/>
            <person name="Malfatti S.A."/>
            <person name="Norton J.M."/>
            <person name="Poret-Peterson A.T."/>
            <person name="Vergez L.M."/>
            <person name="Ward B.B."/>
        </authorList>
    </citation>
    <scope>NUCLEOTIDE SEQUENCE [LARGE SCALE GENOMIC DNA]</scope>
    <source>
        <strain>ATCC 19707 / BCRC 17464 / JCM 30415 / NCIMB 11848 / C-107</strain>
    </source>
</reference>
<gene>
    <name evidence="1" type="primary">pcm2</name>
    <name type="ordered locus">Noc_1546</name>
</gene>
<dbReference type="EC" id="2.1.1.77" evidence="1"/>
<dbReference type="EMBL" id="CP000127">
    <property type="protein sequence ID" value="ABA58030.1"/>
    <property type="molecule type" value="Genomic_DNA"/>
</dbReference>
<dbReference type="RefSeq" id="WP_002810127.1">
    <property type="nucleotide sequence ID" value="NC_007484.1"/>
</dbReference>
<dbReference type="SMR" id="Q3JAW6"/>
<dbReference type="STRING" id="323261.Noc_1546"/>
<dbReference type="KEGG" id="noc:Noc_1546"/>
<dbReference type="eggNOG" id="COG2518">
    <property type="taxonomic scope" value="Bacteria"/>
</dbReference>
<dbReference type="HOGENOM" id="CLU_055432_2_0_6"/>
<dbReference type="InParanoid" id="Q3JAW6"/>
<dbReference type="Proteomes" id="UP000006838">
    <property type="component" value="Chromosome"/>
</dbReference>
<dbReference type="GO" id="GO:0005737">
    <property type="term" value="C:cytoplasm"/>
    <property type="evidence" value="ECO:0007669"/>
    <property type="project" value="UniProtKB-SubCell"/>
</dbReference>
<dbReference type="GO" id="GO:0004719">
    <property type="term" value="F:protein-L-isoaspartate (D-aspartate) O-methyltransferase activity"/>
    <property type="evidence" value="ECO:0007669"/>
    <property type="project" value="UniProtKB-UniRule"/>
</dbReference>
<dbReference type="GO" id="GO:0032259">
    <property type="term" value="P:methylation"/>
    <property type="evidence" value="ECO:0007669"/>
    <property type="project" value="UniProtKB-KW"/>
</dbReference>
<dbReference type="GO" id="GO:0036211">
    <property type="term" value="P:protein modification process"/>
    <property type="evidence" value="ECO:0007669"/>
    <property type="project" value="UniProtKB-UniRule"/>
</dbReference>
<dbReference type="GO" id="GO:0030091">
    <property type="term" value="P:protein repair"/>
    <property type="evidence" value="ECO:0007669"/>
    <property type="project" value="UniProtKB-UniRule"/>
</dbReference>
<dbReference type="CDD" id="cd02440">
    <property type="entry name" value="AdoMet_MTases"/>
    <property type="match status" value="1"/>
</dbReference>
<dbReference type="FunFam" id="3.40.50.150:FF:000010">
    <property type="entry name" value="Protein-L-isoaspartate O-methyltransferase"/>
    <property type="match status" value="1"/>
</dbReference>
<dbReference type="Gene3D" id="3.40.50.150">
    <property type="entry name" value="Vaccinia Virus protein VP39"/>
    <property type="match status" value="1"/>
</dbReference>
<dbReference type="HAMAP" id="MF_00090">
    <property type="entry name" value="PIMT"/>
    <property type="match status" value="1"/>
</dbReference>
<dbReference type="InterPro" id="IPR000682">
    <property type="entry name" value="PCMT"/>
</dbReference>
<dbReference type="InterPro" id="IPR029063">
    <property type="entry name" value="SAM-dependent_MTases_sf"/>
</dbReference>
<dbReference type="NCBIfam" id="TIGR00080">
    <property type="entry name" value="pimt"/>
    <property type="match status" value="1"/>
</dbReference>
<dbReference type="NCBIfam" id="NF001453">
    <property type="entry name" value="PRK00312.1"/>
    <property type="match status" value="1"/>
</dbReference>
<dbReference type="PANTHER" id="PTHR11579">
    <property type="entry name" value="PROTEIN-L-ISOASPARTATE O-METHYLTRANSFERASE"/>
    <property type="match status" value="1"/>
</dbReference>
<dbReference type="PANTHER" id="PTHR11579:SF0">
    <property type="entry name" value="PROTEIN-L-ISOASPARTATE(D-ASPARTATE) O-METHYLTRANSFERASE"/>
    <property type="match status" value="1"/>
</dbReference>
<dbReference type="Pfam" id="PF01135">
    <property type="entry name" value="PCMT"/>
    <property type="match status" value="1"/>
</dbReference>
<dbReference type="SUPFAM" id="SSF53335">
    <property type="entry name" value="S-adenosyl-L-methionine-dependent methyltransferases"/>
    <property type="match status" value="1"/>
</dbReference>
<dbReference type="PROSITE" id="PS01279">
    <property type="entry name" value="PCMT"/>
    <property type="match status" value="1"/>
</dbReference>
<sequence>MKSHREMLRGIQREAGITQRWIGKESLDRRVMEAMKAVPRHEFVPDEQRPYAYDDAPLAIGCGQTISQPYIVALMTDLLDSTPDDIILEVGTGSGYQAAVLSRLVKKVYTIETIEELAQQAEARLERLGYSNVEVQTADGYFGWPEQAPFDGIMVTAAAPSIPKPLIDQLKPEARLVLPLGAGSPQELMVVTKKENDEIDIHRVLGVSFVPLTGKHEVP</sequence>
<comment type="function">
    <text evidence="1">Catalyzes the methyl esterification of L-isoaspartyl residues in peptides and proteins that result from spontaneous decomposition of normal L-aspartyl and L-asparaginyl residues. It plays a role in the repair and/or degradation of damaged proteins.</text>
</comment>
<comment type="catalytic activity">
    <reaction evidence="1">
        <text>[protein]-L-isoaspartate + S-adenosyl-L-methionine = [protein]-L-isoaspartate alpha-methyl ester + S-adenosyl-L-homocysteine</text>
        <dbReference type="Rhea" id="RHEA:12705"/>
        <dbReference type="Rhea" id="RHEA-COMP:12143"/>
        <dbReference type="Rhea" id="RHEA-COMP:12144"/>
        <dbReference type="ChEBI" id="CHEBI:57856"/>
        <dbReference type="ChEBI" id="CHEBI:59789"/>
        <dbReference type="ChEBI" id="CHEBI:90596"/>
        <dbReference type="ChEBI" id="CHEBI:90598"/>
        <dbReference type="EC" id="2.1.1.77"/>
    </reaction>
</comment>
<comment type="subcellular location">
    <subcellularLocation>
        <location evidence="1">Cytoplasm</location>
    </subcellularLocation>
</comment>
<comment type="similarity">
    <text evidence="1">Belongs to the methyltransferase superfamily. L-isoaspartyl/D-aspartyl protein methyltransferase family.</text>
</comment>
<feature type="chain" id="PRO_0000351886" description="Protein-L-isoaspartate O-methyltransferase 2">
    <location>
        <begin position="1"/>
        <end position="219"/>
    </location>
</feature>
<feature type="active site" evidence="1">
    <location>
        <position position="67"/>
    </location>
</feature>
<organism>
    <name type="scientific">Nitrosococcus oceani (strain ATCC 19707 / BCRC 17464 / JCM 30415 / NCIMB 11848 / C-107)</name>
    <dbReference type="NCBI Taxonomy" id="323261"/>
    <lineage>
        <taxon>Bacteria</taxon>
        <taxon>Pseudomonadati</taxon>
        <taxon>Pseudomonadota</taxon>
        <taxon>Gammaproteobacteria</taxon>
        <taxon>Chromatiales</taxon>
        <taxon>Chromatiaceae</taxon>
        <taxon>Nitrosococcus</taxon>
    </lineage>
</organism>
<protein>
    <recommendedName>
        <fullName evidence="1">Protein-L-isoaspartate O-methyltransferase 2</fullName>
        <ecNumber evidence="1">2.1.1.77</ecNumber>
    </recommendedName>
    <alternativeName>
        <fullName evidence="1">L-isoaspartyl protein carboxyl methyltransferase 2</fullName>
    </alternativeName>
    <alternativeName>
        <fullName evidence="1">Protein L-isoaspartyl methyltransferase 2</fullName>
    </alternativeName>
    <alternativeName>
        <fullName evidence="1">Protein-beta-aspartate methyltransferase 2</fullName>
        <shortName evidence="1">PIMT 2</shortName>
    </alternativeName>
</protein>
<proteinExistence type="inferred from homology"/>
<name>PIMT2_NITOC</name>